<dbReference type="EMBL" id="CP001396">
    <property type="protein sequence ID" value="ACR62260.1"/>
    <property type="molecule type" value="Genomic_DNA"/>
</dbReference>
<dbReference type="RefSeq" id="WP_000831543.1">
    <property type="nucleotide sequence ID" value="NC_012759.1"/>
</dbReference>
<dbReference type="SMR" id="C4ZQV5"/>
<dbReference type="KEGG" id="ebw:BWG_2749"/>
<dbReference type="HOGENOM" id="CLU_095624_0_0_6"/>
<dbReference type="HAMAP" id="MF_01188">
    <property type="entry name" value="UPF0441"/>
    <property type="match status" value="1"/>
</dbReference>
<dbReference type="InterPro" id="IPR009576">
    <property type="entry name" value="Biofilm_formation_YgiB"/>
</dbReference>
<dbReference type="NCBIfam" id="NF008655">
    <property type="entry name" value="PRK11653.1"/>
    <property type="match status" value="1"/>
</dbReference>
<dbReference type="Pfam" id="PF06693">
    <property type="entry name" value="DUF1190"/>
    <property type="match status" value="1"/>
</dbReference>
<proteinExistence type="inferred from homology"/>
<evidence type="ECO:0000255" key="1">
    <source>
        <dbReference type="HAMAP-Rule" id="MF_01188"/>
    </source>
</evidence>
<evidence type="ECO:0000256" key="2">
    <source>
        <dbReference type="SAM" id="MobiDB-lite"/>
    </source>
</evidence>
<protein>
    <recommendedName>
        <fullName evidence="1">UPF0441 protein YgiB</fullName>
    </recommendedName>
</protein>
<organism>
    <name type="scientific">Escherichia coli (strain K12 / MC4100 / BW2952)</name>
    <dbReference type="NCBI Taxonomy" id="595496"/>
    <lineage>
        <taxon>Bacteria</taxon>
        <taxon>Pseudomonadati</taxon>
        <taxon>Pseudomonadota</taxon>
        <taxon>Gammaproteobacteria</taxon>
        <taxon>Enterobacterales</taxon>
        <taxon>Enterobacteriaceae</taxon>
        <taxon>Escherichia</taxon>
    </lineage>
</organism>
<gene>
    <name evidence="1" type="primary">ygiB</name>
    <name type="ordered locus">BWG_2749</name>
</gene>
<feature type="chain" id="PRO_1000213789" description="UPF0441 protein YgiB">
    <location>
        <begin position="1"/>
        <end position="223"/>
    </location>
</feature>
<feature type="region of interest" description="Disordered" evidence="2">
    <location>
        <begin position="178"/>
        <end position="223"/>
    </location>
</feature>
<feature type="compositionally biased region" description="Low complexity" evidence="2">
    <location>
        <begin position="178"/>
        <end position="195"/>
    </location>
</feature>
<feature type="compositionally biased region" description="Polar residues" evidence="2">
    <location>
        <begin position="204"/>
        <end position="223"/>
    </location>
</feature>
<comment type="similarity">
    <text evidence="1">Belongs to the UPF0441 family.</text>
</comment>
<accession>C4ZQV5</accession>
<reference key="1">
    <citation type="journal article" date="2009" name="J. Bacteriol.">
        <title>Genomic sequencing reveals regulatory mutations and recombinational events in the widely used MC4100 lineage of Escherichia coli K-12.</title>
        <authorList>
            <person name="Ferenci T."/>
            <person name="Zhou Z."/>
            <person name="Betteridge T."/>
            <person name="Ren Y."/>
            <person name="Liu Y."/>
            <person name="Feng L."/>
            <person name="Reeves P.R."/>
            <person name="Wang L."/>
        </authorList>
    </citation>
    <scope>NUCLEOTIDE SEQUENCE [LARGE SCALE GENOMIC DNA]</scope>
    <source>
        <strain>K12 / MC4100 / BW2952</strain>
    </source>
</reference>
<name>YGIB_ECOBW</name>
<sequence>MKRTKSIRHASFRKNWSARHLTPVALAVATVFMLAGCEKSDETVSLYQNADDCSAANPGKSAECTTAYNNALKEAERTAPKYATREDCVAEFGEGQCQQAPAQAGMAPENQAQAQQSSGSFWMPLMAGYMMGRLMGGGAGFAQQPLFSSKNPASPAYGKYTDATGKNYGAAQPGRTMTVPKTAMAPKPATTTTVTRGGFGESVAKQSTMQRSATGTSSRSMGG</sequence>